<evidence type="ECO:0000255" key="1">
    <source>
        <dbReference type="HAMAP-Rule" id="MF_00504"/>
    </source>
</evidence>
<sequence>MTEAMKITLSTQPADARWGEKATYSINNDGITLHLNGADDLGLIQRAARKIDGLGIKHVQLSGEGWDADRCWAFWQGYKAPKGTRKVEWPDLDDAQRQELDNRLMIIDWVRDTINAPAEELGPSQLAQRAVDLISNVAGDRVTYRITKGEDLREQGYMGLHTVGRGSERSPVLLALDYNPTGDKEAPVYACLVGKGITFDSGGYSIKQTAFMDSMKSDMGGAATVTGALAFAITRGLNKRVKLFLCCADNLISGNAFKLGDIITYRNGKKVEVMNTDAEGRLVLADGLIDASAQKPEMIIDAATLTGAAKTALGNDYHALFSFDDALAGRLLASAAQENEPFWRLPLAEFHRSQLPSNFAELNNTGSAAYPAGASTAAGFLSHFVENYQQGWLHIDCSATYRKAPVEQWSAGATGLGVRTIANLLTA</sequence>
<dbReference type="EC" id="3.4.11.23" evidence="1"/>
<dbReference type="EMBL" id="CP000802">
    <property type="protein sequence ID" value="ABV06933.1"/>
    <property type="molecule type" value="Genomic_DNA"/>
</dbReference>
<dbReference type="RefSeq" id="WP_000133580.1">
    <property type="nucleotide sequence ID" value="NC_009800.1"/>
</dbReference>
<dbReference type="SMR" id="A8A329"/>
<dbReference type="MEROPS" id="M17.004"/>
<dbReference type="KEGG" id="ecx:EcHS_A2674"/>
<dbReference type="HOGENOM" id="CLU_013734_7_1_6"/>
<dbReference type="GO" id="GO:0005737">
    <property type="term" value="C:cytoplasm"/>
    <property type="evidence" value="ECO:0007669"/>
    <property type="project" value="UniProtKB-SubCell"/>
</dbReference>
<dbReference type="GO" id="GO:0030145">
    <property type="term" value="F:manganese ion binding"/>
    <property type="evidence" value="ECO:0007669"/>
    <property type="project" value="UniProtKB-UniRule"/>
</dbReference>
<dbReference type="GO" id="GO:0070006">
    <property type="term" value="F:metalloaminopeptidase activity"/>
    <property type="evidence" value="ECO:0007669"/>
    <property type="project" value="InterPro"/>
</dbReference>
<dbReference type="GO" id="GO:0006508">
    <property type="term" value="P:proteolysis"/>
    <property type="evidence" value="ECO:0007669"/>
    <property type="project" value="UniProtKB-UniRule"/>
</dbReference>
<dbReference type="CDD" id="cd00433">
    <property type="entry name" value="Peptidase_M17"/>
    <property type="match status" value="1"/>
</dbReference>
<dbReference type="FunFam" id="3.40.630.10:FF:000037">
    <property type="entry name" value="Peptidase B"/>
    <property type="match status" value="1"/>
</dbReference>
<dbReference type="Gene3D" id="3.40.630.10">
    <property type="entry name" value="Zn peptidases"/>
    <property type="match status" value="1"/>
</dbReference>
<dbReference type="HAMAP" id="MF_00504">
    <property type="entry name" value="Aminopeptidase_M17"/>
    <property type="match status" value="1"/>
</dbReference>
<dbReference type="InterPro" id="IPR011356">
    <property type="entry name" value="Leucine_aapep/pepB"/>
</dbReference>
<dbReference type="InterPro" id="IPR047620">
    <property type="entry name" value="M17_PepB-like_N"/>
</dbReference>
<dbReference type="InterPro" id="IPR008330">
    <property type="entry name" value="Pept_M17_PepB"/>
</dbReference>
<dbReference type="InterPro" id="IPR000819">
    <property type="entry name" value="Peptidase_M17_C"/>
</dbReference>
<dbReference type="NCBIfam" id="NF003450">
    <property type="entry name" value="PRK05015.1"/>
    <property type="match status" value="1"/>
</dbReference>
<dbReference type="PANTHER" id="PTHR11963">
    <property type="entry name" value="LEUCINE AMINOPEPTIDASE-RELATED"/>
    <property type="match status" value="1"/>
</dbReference>
<dbReference type="PANTHER" id="PTHR11963:SF20">
    <property type="entry name" value="PEPTIDASE B"/>
    <property type="match status" value="1"/>
</dbReference>
<dbReference type="Pfam" id="PF12404">
    <property type="entry name" value="DUF3663"/>
    <property type="match status" value="1"/>
</dbReference>
<dbReference type="Pfam" id="PF00883">
    <property type="entry name" value="Peptidase_M17"/>
    <property type="match status" value="1"/>
</dbReference>
<dbReference type="PIRSF" id="PIRSF036388">
    <property type="entry name" value="Ctsl_amnpptdse_B"/>
    <property type="match status" value="1"/>
</dbReference>
<dbReference type="PRINTS" id="PR00481">
    <property type="entry name" value="LAMNOPPTDASE"/>
</dbReference>
<dbReference type="SUPFAM" id="SSF53187">
    <property type="entry name" value="Zn-dependent exopeptidases"/>
    <property type="match status" value="1"/>
</dbReference>
<dbReference type="PROSITE" id="PS00631">
    <property type="entry name" value="CYTOSOL_AP"/>
    <property type="match status" value="1"/>
</dbReference>
<gene>
    <name evidence="1" type="primary">pepB</name>
    <name type="ordered locus">EcHS_A2674</name>
</gene>
<reference key="1">
    <citation type="journal article" date="2008" name="J. Bacteriol.">
        <title>The pangenome structure of Escherichia coli: comparative genomic analysis of E. coli commensal and pathogenic isolates.</title>
        <authorList>
            <person name="Rasko D.A."/>
            <person name="Rosovitz M.J."/>
            <person name="Myers G.S.A."/>
            <person name="Mongodin E.F."/>
            <person name="Fricke W.F."/>
            <person name="Gajer P."/>
            <person name="Crabtree J."/>
            <person name="Sebaihia M."/>
            <person name="Thomson N.R."/>
            <person name="Chaudhuri R."/>
            <person name="Henderson I.R."/>
            <person name="Sperandio V."/>
            <person name="Ravel J."/>
        </authorList>
    </citation>
    <scope>NUCLEOTIDE SEQUENCE [LARGE SCALE GENOMIC DNA]</scope>
    <source>
        <strain>HS</strain>
    </source>
</reference>
<name>PEPB_ECOHS</name>
<comment type="function">
    <text evidence="1">Probably plays an important role in intracellular peptide degradation.</text>
</comment>
<comment type="catalytic activity">
    <reaction evidence="1">
        <text>Release of an N-terminal amino acid, Xaa, from a peptide or arylamide. Xaa is preferably Glu or Asp but may be other amino acids, including Leu, Met, His, Cys and Gln.</text>
        <dbReference type="EC" id="3.4.11.23"/>
    </reaction>
</comment>
<comment type="cofactor">
    <cofactor evidence="1">
        <name>Mn(2+)</name>
        <dbReference type="ChEBI" id="CHEBI:29035"/>
    </cofactor>
    <text evidence="1">Binds 2 manganese ions per subunit.</text>
</comment>
<comment type="subunit">
    <text evidence="1">Homohexamer.</text>
</comment>
<comment type="subcellular location">
    <subcellularLocation>
        <location evidence="1">Cytoplasm</location>
    </subcellularLocation>
</comment>
<comment type="similarity">
    <text evidence="1">Belongs to the peptidase M17 family.</text>
</comment>
<accession>A8A329</accession>
<protein>
    <recommendedName>
        <fullName evidence="1">Peptidase B</fullName>
        <ecNumber evidence="1">3.4.11.23</ecNumber>
    </recommendedName>
    <alternativeName>
        <fullName evidence="1">Aminopeptidase B</fullName>
    </alternativeName>
</protein>
<feature type="chain" id="PRO_1000060516" description="Peptidase B">
    <location>
        <begin position="1"/>
        <end position="427"/>
    </location>
</feature>
<feature type="active site" evidence="1">
    <location>
        <position position="207"/>
    </location>
</feature>
<feature type="active site" evidence="1">
    <location>
        <position position="281"/>
    </location>
</feature>
<feature type="binding site" evidence="1">
    <location>
        <position position="195"/>
    </location>
    <ligand>
        <name>Mn(2+)</name>
        <dbReference type="ChEBI" id="CHEBI:29035"/>
        <label>2</label>
    </ligand>
</feature>
<feature type="binding site" evidence="1">
    <location>
        <position position="200"/>
    </location>
    <ligand>
        <name>Mn(2+)</name>
        <dbReference type="ChEBI" id="CHEBI:29035"/>
        <label>1</label>
    </ligand>
</feature>
<feature type="binding site" evidence="1">
    <location>
        <position position="200"/>
    </location>
    <ligand>
        <name>Mn(2+)</name>
        <dbReference type="ChEBI" id="CHEBI:29035"/>
        <label>2</label>
    </ligand>
</feature>
<feature type="binding site" evidence="1">
    <location>
        <position position="218"/>
    </location>
    <ligand>
        <name>Mn(2+)</name>
        <dbReference type="ChEBI" id="CHEBI:29035"/>
        <label>2</label>
    </ligand>
</feature>
<feature type="binding site" evidence="1">
    <location>
        <position position="277"/>
    </location>
    <ligand>
        <name>Mn(2+)</name>
        <dbReference type="ChEBI" id="CHEBI:29035"/>
        <label>1</label>
    </ligand>
</feature>
<feature type="binding site" evidence="1">
    <location>
        <position position="279"/>
    </location>
    <ligand>
        <name>Mn(2+)</name>
        <dbReference type="ChEBI" id="CHEBI:29035"/>
        <label>1</label>
    </ligand>
</feature>
<feature type="binding site" evidence="1">
    <location>
        <position position="279"/>
    </location>
    <ligand>
        <name>Mn(2+)</name>
        <dbReference type="ChEBI" id="CHEBI:29035"/>
        <label>2</label>
    </ligand>
</feature>
<organism>
    <name type="scientific">Escherichia coli O9:H4 (strain HS)</name>
    <dbReference type="NCBI Taxonomy" id="331112"/>
    <lineage>
        <taxon>Bacteria</taxon>
        <taxon>Pseudomonadati</taxon>
        <taxon>Pseudomonadota</taxon>
        <taxon>Gammaproteobacteria</taxon>
        <taxon>Enterobacterales</taxon>
        <taxon>Enterobacteriaceae</taxon>
        <taxon>Escherichia</taxon>
    </lineage>
</organism>
<keyword id="KW-0031">Aminopeptidase</keyword>
<keyword id="KW-0963">Cytoplasm</keyword>
<keyword id="KW-0378">Hydrolase</keyword>
<keyword id="KW-0464">Manganese</keyword>
<keyword id="KW-0479">Metal-binding</keyword>
<keyword id="KW-0645">Protease</keyword>
<proteinExistence type="inferred from homology"/>